<dbReference type="EC" id="3.4.24.-"/>
<dbReference type="EMBL" id="AF170722">
    <property type="protein sequence ID" value="AAF17927.1"/>
    <property type="molecule type" value="Genomic_DNA"/>
</dbReference>
<dbReference type="RefSeq" id="NP_051934.1">
    <property type="nucleotide sequence ID" value="NC_001266.1"/>
</dbReference>
<dbReference type="SMR" id="Q9Q926"/>
<dbReference type="MEROPS" id="M44.001"/>
<dbReference type="KEGG" id="vg:1486888"/>
<dbReference type="Proteomes" id="UP000000868">
    <property type="component" value="Segment"/>
</dbReference>
<dbReference type="GO" id="GO:0004222">
    <property type="term" value="F:metalloendopeptidase activity"/>
    <property type="evidence" value="ECO:0007669"/>
    <property type="project" value="InterPro"/>
</dbReference>
<dbReference type="GO" id="GO:0008270">
    <property type="term" value="F:zinc ion binding"/>
    <property type="evidence" value="ECO:0007669"/>
    <property type="project" value="InterPro"/>
</dbReference>
<dbReference type="GO" id="GO:0006508">
    <property type="term" value="P:proteolysis"/>
    <property type="evidence" value="ECO:0007669"/>
    <property type="project" value="UniProtKB-KW"/>
</dbReference>
<dbReference type="GO" id="GO:0019058">
    <property type="term" value="P:viral life cycle"/>
    <property type="evidence" value="ECO:0007669"/>
    <property type="project" value="InterPro"/>
</dbReference>
<dbReference type="InterPro" id="IPR005072">
    <property type="entry name" value="Peptidase_M44"/>
</dbReference>
<dbReference type="Pfam" id="PF03410">
    <property type="entry name" value="Peptidase_M44"/>
    <property type="match status" value="1"/>
</dbReference>
<dbReference type="PIRSF" id="PIRSF015679">
    <property type="entry name" value="Peptidase_M44"/>
    <property type="match status" value="1"/>
</dbReference>
<evidence type="ECO:0000250" key="1"/>
<evidence type="ECO:0000255" key="2"/>
<evidence type="ECO:0000305" key="3"/>
<name>PG085_RFVKA</name>
<protein>
    <recommendedName>
        <fullName>Probable metalloendopeptidase G1-type</fullName>
        <ecNumber>3.4.24.-</ecNumber>
    </recommendedName>
</protein>
<feature type="chain" id="PRO_0000218451" description="Probable metalloendopeptidase G1-type">
    <location>
        <begin position="1"/>
        <end position="590"/>
    </location>
</feature>
<feature type="active site" evidence="2">
    <location>
        <position position="44"/>
    </location>
</feature>
<feature type="binding site" evidence="2">
    <location>
        <position position="41"/>
    </location>
    <ligand>
        <name>Zn(2+)</name>
        <dbReference type="ChEBI" id="CHEBI:29105"/>
        <note>catalytic</note>
    </ligand>
</feature>
<feature type="binding site" evidence="2">
    <location>
        <position position="45"/>
    </location>
    <ligand>
        <name>Zn(2+)</name>
        <dbReference type="ChEBI" id="CHEBI:29105"/>
        <note>catalytic</note>
    </ligand>
</feature>
<organismHost>
    <name type="scientific">Oryctolagus cuniculus</name>
    <name type="common">Rabbit</name>
    <dbReference type="NCBI Taxonomy" id="9986"/>
</organismHost>
<gene>
    <name type="primary">GP045L</name>
    <name type="synonym">S045L</name>
</gene>
<reference key="1">
    <citation type="journal article" date="1999" name="Virology">
        <title>The complete genome sequence of shope (Rabbit) fibroma virus.</title>
        <authorList>
            <person name="Willer D.O."/>
            <person name="McFadden G."/>
            <person name="Evans D.H."/>
        </authorList>
    </citation>
    <scope>NUCLEOTIDE SEQUENCE [LARGE SCALE GENOMIC DNA]</scope>
</reference>
<accession>Q9Q926</accession>
<keyword id="KW-0378">Hydrolase</keyword>
<keyword id="KW-0479">Metal-binding</keyword>
<keyword id="KW-0482">Metalloprotease</keyword>
<keyword id="KW-0645">Protease</keyword>
<keyword id="KW-1185">Reference proteome</keyword>
<keyword id="KW-0862">Zinc</keyword>
<organism>
    <name type="scientific">Rabbit fibroma virus (strain Kasza)</name>
    <name type="common">RFV</name>
    <name type="synonym">Shope fibroma virus (strain Kasza)</name>
    <dbReference type="NCBI Taxonomy" id="10272"/>
    <lineage>
        <taxon>Viruses</taxon>
        <taxon>Varidnaviria</taxon>
        <taxon>Bamfordvirae</taxon>
        <taxon>Nucleocytoviricota</taxon>
        <taxon>Pokkesviricetes</taxon>
        <taxon>Chitovirales</taxon>
        <taxon>Poxviridae</taxon>
        <taxon>Chordopoxvirinae</taxon>
        <taxon>Leporipoxvirus</taxon>
        <taxon>Rabbit fibroma virus</taxon>
    </lineage>
</organism>
<sequence>MIVFDNGVRVFINTSTNKDIYVGISGFGFEKDIGGILGTAHLLEHILISFDVSRFIANASTARSYMSFWCTSIRGRSTPVDAIRTLISWFFDRDGLKHYFPVSKIKYHIKELENEYYFRNEVFHCMDALTFLANGDLYNGGRLSMLDRLDDMPLILQDRMCAITGPNIVIFVRELNDVVLSLLVSTFGTLPSCPLTIPCTLPTPIGGKIIMMPSPFYTVMVRVQPSLYNILSILCLYEIYHLVDYETVNNKLYVTISFIHEHEYESFLHGSARLNFTIYKKIRLHYGDDFLMNMYLSFPCIRHDIFDYLTIINTNVSTMIPSLEQNIYQSIKTGDYIVVYPNFSNTMSNVADRQLHKTVVIDTNIVYVTKPTTVIDLMKKHTHNDMYIKYSDTEFIDYVQLALGLRRKIHKNVNGIHIRHQFSADDIKTILESETFMKYSKSKPAAMYQYLILSFFVSGNTIEDILQHRESVIKLCRTYKNKILLGKQTRYDIQTLSSFVCGIFKGPSITSEYLTDIMWKLKRKGLIYSLEFVELQKNMFYLFMFTIYPEDVTSYLTSRKLFTSRCVVVSKKCNVEDFSSMKKDIIIKLR</sequence>
<proteinExistence type="inferred from homology"/>
<comment type="function">
    <text evidence="1">Seems to be involved in viral proteins maturation by cleavage at Ala-Gly-|-Xaa motifs.</text>
</comment>
<comment type="cofactor">
    <cofactor evidence="3">
        <name>Zn(2+)</name>
        <dbReference type="ChEBI" id="CHEBI:29105"/>
    </cofactor>
    <text evidence="3">Binds 1 zinc ion.</text>
</comment>
<comment type="similarity">
    <text evidence="3">Belongs to the peptidase M44 family.</text>
</comment>